<comment type="function">
    <text evidence="1">Catalyzes the reversible oxidation of malate to oxaloacetate.</text>
</comment>
<comment type="catalytic activity">
    <reaction evidence="1">
        <text>(S)-malate + NAD(+) = oxaloacetate + NADH + H(+)</text>
        <dbReference type="Rhea" id="RHEA:21432"/>
        <dbReference type="ChEBI" id="CHEBI:15378"/>
        <dbReference type="ChEBI" id="CHEBI:15589"/>
        <dbReference type="ChEBI" id="CHEBI:16452"/>
        <dbReference type="ChEBI" id="CHEBI:57540"/>
        <dbReference type="ChEBI" id="CHEBI:57945"/>
        <dbReference type="EC" id="1.1.1.37"/>
    </reaction>
</comment>
<comment type="similarity">
    <text evidence="1">Belongs to the LDH/MDH superfamily. MDH type 2 family.</text>
</comment>
<feature type="chain" id="PRO_0000113389" description="Malate dehydrogenase">
    <location>
        <begin position="1"/>
        <end position="329"/>
    </location>
</feature>
<feature type="active site" description="Proton acceptor" evidence="1">
    <location>
        <position position="189"/>
    </location>
</feature>
<feature type="binding site" evidence="1">
    <location>
        <begin position="13"/>
        <end position="19"/>
    </location>
    <ligand>
        <name>NAD(+)</name>
        <dbReference type="ChEBI" id="CHEBI:57540"/>
    </ligand>
</feature>
<feature type="binding site" evidence="1">
    <location>
        <position position="94"/>
    </location>
    <ligand>
        <name>substrate</name>
    </ligand>
</feature>
<feature type="binding site" evidence="1">
    <location>
        <position position="100"/>
    </location>
    <ligand>
        <name>substrate</name>
    </ligand>
</feature>
<feature type="binding site" evidence="1">
    <location>
        <position position="107"/>
    </location>
    <ligand>
        <name>NAD(+)</name>
        <dbReference type="ChEBI" id="CHEBI:57540"/>
    </ligand>
</feature>
<feature type="binding site" evidence="1">
    <location>
        <position position="114"/>
    </location>
    <ligand>
        <name>NAD(+)</name>
        <dbReference type="ChEBI" id="CHEBI:57540"/>
    </ligand>
</feature>
<feature type="binding site" evidence="1">
    <location>
        <begin position="131"/>
        <end position="133"/>
    </location>
    <ligand>
        <name>NAD(+)</name>
        <dbReference type="ChEBI" id="CHEBI:57540"/>
    </ligand>
</feature>
<feature type="binding site" evidence="1">
    <location>
        <position position="133"/>
    </location>
    <ligand>
        <name>substrate</name>
    </ligand>
</feature>
<feature type="binding site" evidence="1">
    <location>
        <position position="164"/>
    </location>
    <ligand>
        <name>substrate</name>
    </ligand>
</feature>
<gene>
    <name evidence="1" type="primary">mdh</name>
    <name type="ordered locus">Psyc_1763</name>
</gene>
<name>MDH_PSYA2</name>
<reference key="1">
    <citation type="journal article" date="2010" name="Appl. Environ. Microbiol.">
        <title>The genome sequence of Psychrobacter arcticus 273-4, a psychroactive Siberian permafrost bacterium, reveals mechanisms for adaptation to low-temperature growth.</title>
        <authorList>
            <person name="Ayala-del-Rio H.L."/>
            <person name="Chain P.S."/>
            <person name="Grzymski J.J."/>
            <person name="Ponder M.A."/>
            <person name="Ivanova N."/>
            <person name="Bergholz P.W."/>
            <person name="Di Bartolo G."/>
            <person name="Hauser L."/>
            <person name="Land M."/>
            <person name="Bakermans C."/>
            <person name="Rodrigues D."/>
            <person name="Klappenbach J."/>
            <person name="Zarka D."/>
            <person name="Larimer F."/>
            <person name="Richardson P."/>
            <person name="Murray A."/>
            <person name="Thomashow M."/>
            <person name="Tiedje J.M."/>
        </authorList>
    </citation>
    <scope>NUCLEOTIDE SEQUENCE [LARGE SCALE GENOMIC DNA]</scope>
    <source>
        <strain>DSM 17307 / VKM B-2377 / 273-4</strain>
    </source>
</reference>
<keyword id="KW-0520">NAD</keyword>
<keyword id="KW-0560">Oxidoreductase</keyword>
<keyword id="KW-1185">Reference proteome</keyword>
<keyword id="KW-0816">Tricarboxylic acid cycle</keyword>
<evidence type="ECO:0000255" key="1">
    <source>
        <dbReference type="HAMAP-Rule" id="MF_01517"/>
    </source>
</evidence>
<proteinExistence type="inferred from homology"/>
<organism>
    <name type="scientific">Psychrobacter arcticus (strain DSM 17307 / VKM B-2377 / 273-4)</name>
    <dbReference type="NCBI Taxonomy" id="259536"/>
    <lineage>
        <taxon>Bacteria</taxon>
        <taxon>Pseudomonadati</taxon>
        <taxon>Pseudomonadota</taxon>
        <taxon>Gammaproteobacteria</taxon>
        <taxon>Moraxellales</taxon>
        <taxon>Moraxellaceae</taxon>
        <taxon>Psychrobacter</taxon>
    </lineage>
</organism>
<sequence length="329" mass="35235">MSMKQPVRVAVTGAAGNISYAMLFRIASGEMLGKDQPVILQLLEIAPALDALKGVVMELEDCAFPLLAGIVQTDDATVAFKDVDYALLVGSRPRGPGMERKDLLEANAAIFSAQGKALNDVASRDVKVLVVGNPANTNALIAQRNAPDLDPRNFTAMTRLDHNRAMAQLAGKTDSTVNDVKKMIIWGNHSSTQYPDLTASTVNGKLALDLVDRTWYEGTYIPEVQQRGAAIIKARGASSAASAANAAIAHMRTWVLGTDENDWVSMGVYSNGEYGIAKGLIYSFPCTCTNGDWSIVDGVDVSSAFSKEKMAATEQELSEERDAVAHLLP</sequence>
<accession>Q4FQU7</accession>
<protein>
    <recommendedName>
        <fullName evidence="1">Malate dehydrogenase</fullName>
        <ecNumber evidence="1">1.1.1.37</ecNumber>
    </recommendedName>
</protein>
<dbReference type="EC" id="1.1.1.37" evidence="1"/>
<dbReference type="EMBL" id="CP000082">
    <property type="protein sequence ID" value="AAZ19611.1"/>
    <property type="molecule type" value="Genomic_DNA"/>
</dbReference>
<dbReference type="RefSeq" id="WP_011281023.1">
    <property type="nucleotide sequence ID" value="NC_007204.1"/>
</dbReference>
<dbReference type="SMR" id="Q4FQU7"/>
<dbReference type="STRING" id="259536.Psyc_1763"/>
<dbReference type="KEGG" id="par:Psyc_1763"/>
<dbReference type="eggNOG" id="COG0039">
    <property type="taxonomic scope" value="Bacteria"/>
</dbReference>
<dbReference type="HOGENOM" id="CLU_040727_2_0_6"/>
<dbReference type="Proteomes" id="UP000000546">
    <property type="component" value="Chromosome"/>
</dbReference>
<dbReference type="GO" id="GO:0030060">
    <property type="term" value="F:L-malate dehydrogenase (NAD+) activity"/>
    <property type="evidence" value="ECO:0007669"/>
    <property type="project" value="UniProtKB-UniRule"/>
</dbReference>
<dbReference type="GO" id="GO:0006108">
    <property type="term" value="P:malate metabolic process"/>
    <property type="evidence" value="ECO:0007669"/>
    <property type="project" value="InterPro"/>
</dbReference>
<dbReference type="GO" id="GO:0006099">
    <property type="term" value="P:tricarboxylic acid cycle"/>
    <property type="evidence" value="ECO:0007669"/>
    <property type="project" value="UniProtKB-UniRule"/>
</dbReference>
<dbReference type="CDD" id="cd01338">
    <property type="entry name" value="MDH_chloroplast-like"/>
    <property type="match status" value="1"/>
</dbReference>
<dbReference type="FunFam" id="3.40.50.720:FF:000010">
    <property type="entry name" value="Malate dehydrogenase"/>
    <property type="match status" value="1"/>
</dbReference>
<dbReference type="FunFam" id="3.90.110.10:FF:000002">
    <property type="entry name" value="Malate dehydrogenase"/>
    <property type="match status" value="1"/>
</dbReference>
<dbReference type="Gene3D" id="3.90.110.10">
    <property type="entry name" value="Lactate dehydrogenase/glycoside hydrolase, family 4, C-terminal"/>
    <property type="match status" value="1"/>
</dbReference>
<dbReference type="Gene3D" id="3.40.50.720">
    <property type="entry name" value="NAD(P)-binding Rossmann-like Domain"/>
    <property type="match status" value="1"/>
</dbReference>
<dbReference type="HAMAP" id="MF_01517">
    <property type="entry name" value="Malate_dehydrog_2"/>
    <property type="match status" value="1"/>
</dbReference>
<dbReference type="InterPro" id="IPR001557">
    <property type="entry name" value="L-lactate/malate_DH"/>
</dbReference>
<dbReference type="InterPro" id="IPR022383">
    <property type="entry name" value="Lactate/malate_DH_C"/>
</dbReference>
<dbReference type="InterPro" id="IPR001236">
    <property type="entry name" value="Lactate/malate_DH_N"/>
</dbReference>
<dbReference type="InterPro" id="IPR015955">
    <property type="entry name" value="Lactate_DH/Glyco_Ohase_4_C"/>
</dbReference>
<dbReference type="InterPro" id="IPR001252">
    <property type="entry name" value="Malate_DH_AS"/>
</dbReference>
<dbReference type="InterPro" id="IPR010945">
    <property type="entry name" value="Malate_DH_type2"/>
</dbReference>
<dbReference type="InterPro" id="IPR036291">
    <property type="entry name" value="NAD(P)-bd_dom_sf"/>
</dbReference>
<dbReference type="NCBIfam" id="TIGR01759">
    <property type="entry name" value="MalateDH-SF1"/>
    <property type="match status" value="1"/>
</dbReference>
<dbReference type="NCBIfam" id="NF003916">
    <property type="entry name" value="PRK05442.1"/>
    <property type="match status" value="1"/>
</dbReference>
<dbReference type="PANTHER" id="PTHR23382">
    <property type="entry name" value="MALATE DEHYDROGENASE"/>
    <property type="match status" value="1"/>
</dbReference>
<dbReference type="Pfam" id="PF02866">
    <property type="entry name" value="Ldh_1_C"/>
    <property type="match status" value="1"/>
</dbReference>
<dbReference type="Pfam" id="PF00056">
    <property type="entry name" value="Ldh_1_N"/>
    <property type="match status" value="1"/>
</dbReference>
<dbReference type="PIRSF" id="PIRSF000102">
    <property type="entry name" value="Lac_mal_DH"/>
    <property type="match status" value="1"/>
</dbReference>
<dbReference type="SUPFAM" id="SSF56327">
    <property type="entry name" value="LDH C-terminal domain-like"/>
    <property type="match status" value="1"/>
</dbReference>
<dbReference type="SUPFAM" id="SSF51735">
    <property type="entry name" value="NAD(P)-binding Rossmann-fold domains"/>
    <property type="match status" value="1"/>
</dbReference>
<dbReference type="PROSITE" id="PS00068">
    <property type="entry name" value="MDH"/>
    <property type="match status" value="1"/>
</dbReference>